<feature type="chain" id="PRO_0000126535" description="Small ribosomal subunit protein uS8">
    <location>
        <begin position="1"/>
        <end position="129"/>
    </location>
</feature>
<proteinExistence type="inferred from homology"/>
<accession>O28369</accession>
<evidence type="ECO:0000255" key="1">
    <source>
        <dbReference type="HAMAP-Rule" id="MF_01302"/>
    </source>
</evidence>
<evidence type="ECO:0000305" key="2"/>
<sequence length="129" mass="14454">MSVDTLSNAMIAIKNAEMVGEKKCEIKPASKLIGNVLKVMKDYGYIKGFEYVENHRGGKFIVELSGNINDCGAIRPRFSSSVTEYEMYEKRYLPARDFGILIVSTTKGVMSQKDARKQRLGGVLLAYVY</sequence>
<name>RS8_ARCFU</name>
<organism>
    <name type="scientific">Archaeoglobus fulgidus (strain ATCC 49558 / DSM 4304 / JCM 9628 / NBRC 100126 / VC-16)</name>
    <dbReference type="NCBI Taxonomy" id="224325"/>
    <lineage>
        <taxon>Archaea</taxon>
        <taxon>Methanobacteriati</taxon>
        <taxon>Methanobacteriota</taxon>
        <taxon>Archaeoglobi</taxon>
        <taxon>Archaeoglobales</taxon>
        <taxon>Archaeoglobaceae</taxon>
        <taxon>Archaeoglobus</taxon>
    </lineage>
</organism>
<comment type="function">
    <text evidence="1">One of the primary rRNA binding proteins, it binds directly to 16S rRNA central domain where it helps coordinate assembly of the platform of the 30S subunit.</text>
</comment>
<comment type="subunit">
    <text evidence="1">Part of the 30S ribosomal subunit.</text>
</comment>
<comment type="similarity">
    <text evidence="1">Belongs to the universal ribosomal protein uS8 family.</text>
</comment>
<comment type="sequence caution" evidence="2">
    <conflict type="erroneous initiation">
        <sequence resource="EMBL-CDS" id="AAB89341"/>
    </conflict>
    <text>Extended N-terminus.</text>
</comment>
<keyword id="KW-1185">Reference proteome</keyword>
<keyword id="KW-0687">Ribonucleoprotein</keyword>
<keyword id="KW-0689">Ribosomal protein</keyword>
<keyword id="KW-0694">RNA-binding</keyword>
<keyword id="KW-0699">rRNA-binding</keyword>
<dbReference type="EMBL" id="AE000782">
    <property type="protein sequence ID" value="AAB89341.1"/>
    <property type="status" value="ALT_INIT"/>
    <property type="molecule type" value="Genomic_DNA"/>
</dbReference>
<dbReference type="PIR" id="E69488">
    <property type="entry name" value="E69488"/>
</dbReference>
<dbReference type="RefSeq" id="WP_048064747.1">
    <property type="nucleotide sequence ID" value="NC_000917.1"/>
</dbReference>
<dbReference type="SMR" id="O28369"/>
<dbReference type="STRING" id="224325.AF_1910"/>
<dbReference type="PaxDb" id="224325-AF_1910"/>
<dbReference type="EnsemblBacteria" id="AAB89341">
    <property type="protein sequence ID" value="AAB89341"/>
    <property type="gene ID" value="AF_1910"/>
</dbReference>
<dbReference type="KEGG" id="afu:AF_1910"/>
<dbReference type="eggNOG" id="arCOG04091">
    <property type="taxonomic scope" value="Archaea"/>
</dbReference>
<dbReference type="HOGENOM" id="CLU_098428_1_1_2"/>
<dbReference type="OrthoDB" id="5670at2157"/>
<dbReference type="Proteomes" id="UP000002199">
    <property type="component" value="Chromosome"/>
</dbReference>
<dbReference type="GO" id="GO:1990904">
    <property type="term" value="C:ribonucleoprotein complex"/>
    <property type="evidence" value="ECO:0007669"/>
    <property type="project" value="UniProtKB-KW"/>
</dbReference>
<dbReference type="GO" id="GO:0005840">
    <property type="term" value="C:ribosome"/>
    <property type="evidence" value="ECO:0007669"/>
    <property type="project" value="UniProtKB-KW"/>
</dbReference>
<dbReference type="GO" id="GO:0019843">
    <property type="term" value="F:rRNA binding"/>
    <property type="evidence" value="ECO:0007669"/>
    <property type="project" value="UniProtKB-UniRule"/>
</dbReference>
<dbReference type="GO" id="GO:0003735">
    <property type="term" value="F:structural constituent of ribosome"/>
    <property type="evidence" value="ECO:0007669"/>
    <property type="project" value="InterPro"/>
</dbReference>
<dbReference type="GO" id="GO:0006412">
    <property type="term" value="P:translation"/>
    <property type="evidence" value="ECO:0007669"/>
    <property type="project" value="UniProtKB-UniRule"/>
</dbReference>
<dbReference type="Gene3D" id="3.30.1370.30">
    <property type="match status" value="1"/>
</dbReference>
<dbReference type="Gene3D" id="3.30.1490.10">
    <property type="match status" value="1"/>
</dbReference>
<dbReference type="HAMAP" id="MF_01302_A">
    <property type="entry name" value="Ribosomal_uS8_A"/>
    <property type="match status" value="1"/>
</dbReference>
<dbReference type="InterPro" id="IPR000630">
    <property type="entry name" value="Ribosomal_uS8"/>
</dbReference>
<dbReference type="InterPro" id="IPR047863">
    <property type="entry name" value="Ribosomal_uS8_CS"/>
</dbReference>
<dbReference type="InterPro" id="IPR035987">
    <property type="entry name" value="Ribosomal_uS8_sf"/>
</dbReference>
<dbReference type="NCBIfam" id="NF003115">
    <property type="entry name" value="PRK04034.1"/>
    <property type="match status" value="1"/>
</dbReference>
<dbReference type="PANTHER" id="PTHR11758">
    <property type="entry name" value="40S RIBOSOMAL PROTEIN S15A"/>
    <property type="match status" value="1"/>
</dbReference>
<dbReference type="Pfam" id="PF00410">
    <property type="entry name" value="Ribosomal_S8"/>
    <property type="match status" value="1"/>
</dbReference>
<dbReference type="SUPFAM" id="SSF56047">
    <property type="entry name" value="Ribosomal protein S8"/>
    <property type="match status" value="1"/>
</dbReference>
<dbReference type="PROSITE" id="PS00053">
    <property type="entry name" value="RIBOSOMAL_S8"/>
    <property type="match status" value="1"/>
</dbReference>
<gene>
    <name evidence="1" type="primary">rps8</name>
    <name type="ordered locus">AF_1910</name>
</gene>
<protein>
    <recommendedName>
        <fullName evidence="1">Small ribosomal subunit protein uS8</fullName>
    </recommendedName>
    <alternativeName>
        <fullName evidence="2">30S ribosomal protein S8</fullName>
    </alternativeName>
</protein>
<reference key="1">
    <citation type="journal article" date="1997" name="Nature">
        <title>The complete genome sequence of the hyperthermophilic, sulphate-reducing archaeon Archaeoglobus fulgidus.</title>
        <authorList>
            <person name="Klenk H.-P."/>
            <person name="Clayton R.A."/>
            <person name="Tomb J.-F."/>
            <person name="White O."/>
            <person name="Nelson K.E."/>
            <person name="Ketchum K.A."/>
            <person name="Dodson R.J."/>
            <person name="Gwinn M.L."/>
            <person name="Hickey E.K."/>
            <person name="Peterson J.D."/>
            <person name="Richardson D.L."/>
            <person name="Kerlavage A.R."/>
            <person name="Graham D.E."/>
            <person name="Kyrpides N.C."/>
            <person name="Fleischmann R.D."/>
            <person name="Quackenbush J."/>
            <person name="Lee N.H."/>
            <person name="Sutton G.G."/>
            <person name="Gill S.R."/>
            <person name="Kirkness E.F."/>
            <person name="Dougherty B.A."/>
            <person name="McKenney K."/>
            <person name="Adams M.D."/>
            <person name="Loftus B.J."/>
            <person name="Peterson S.N."/>
            <person name="Reich C.I."/>
            <person name="McNeil L.K."/>
            <person name="Badger J.H."/>
            <person name="Glodek A."/>
            <person name="Zhou L."/>
            <person name="Overbeek R."/>
            <person name="Gocayne J.D."/>
            <person name="Weidman J.F."/>
            <person name="McDonald L.A."/>
            <person name="Utterback T.R."/>
            <person name="Cotton M.D."/>
            <person name="Spriggs T."/>
            <person name="Artiach P."/>
            <person name="Kaine B.P."/>
            <person name="Sykes S.M."/>
            <person name="Sadow P.W."/>
            <person name="D'Andrea K.P."/>
            <person name="Bowman C."/>
            <person name="Fujii C."/>
            <person name="Garland S.A."/>
            <person name="Mason T.M."/>
            <person name="Olsen G.J."/>
            <person name="Fraser C.M."/>
            <person name="Smith H.O."/>
            <person name="Woese C.R."/>
            <person name="Venter J.C."/>
        </authorList>
    </citation>
    <scope>NUCLEOTIDE SEQUENCE [LARGE SCALE GENOMIC DNA]</scope>
    <source>
        <strain>ATCC 49558 / DSM 4304 / JCM 9628 / NBRC 100126 / VC-16</strain>
    </source>
</reference>